<dbReference type="EMBL" id="CP000095">
    <property type="protein sequence ID" value="AAZ58618.1"/>
    <property type="molecule type" value="Genomic_DNA"/>
</dbReference>
<dbReference type="RefSeq" id="WP_011295472.1">
    <property type="nucleotide sequence ID" value="NC_007335.2"/>
</dbReference>
<dbReference type="SMR" id="Q46IR0"/>
<dbReference type="STRING" id="59920.PMN2A_1128"/>
<dbReference type="KEGG" id="pmn:PMN2A_1128"/>
<dbReference type="HOGENOM" id="CLU_041575_5_2_3"/>
<dbReference type="OrthoDB" id="9803201at2"/>
<dbReference type="PhylomeDB" id="Q46IR0"/>
<dbReference type="Proteomes" id="UP000002535">
    <property type="component" value="Chromosome"/>
</dbReference>
<dbReference type="GO" id="GO:1990904">
    <property type="term" value="C:ribonucleoprotein complex"/>
    <property type="evidence" value="ECO:0007669"/>
    <property type="project" value="UniProtKB-KW"/>
</dbReference>
<dbReference type="GO" id="GO:0005840">
    <property type="term" value="C:ribosome"/>
    <property type="evidence" value="ECO:0007669"/>
    <property type="project" value="UniProtKB-KW"/>
</dbReference>
<dbReference type="GO" id="GO:0019843">
    <property type="term" value="F:rRNA binding"/>
    <property type="evidence" value="ECO:0007669"/>
    <property type="project" value="UniProtKB-UniRule"/>
</dbReference>
<dbReference type="GO" id="GO:0003735">
    <property type="term" value="F:structural constituent of ribosome"/>
    <property type="evidence" value="ECO:0007669"/>
    <property type="project" value="InterPro"/>
</dbReference>
<dbReference type="GO" id="GO:0006412">
    <property type="term" value="P:translation"/>
    <property type="evidence" value="ECO:0007669"/>
    <property type="project" value="UniProtKB-UniRule"/>
</dbReference>
<dbReference type="Gene3D" id="3.40.1370.10">
    <property type="match status" value="1"/>
</dbReference>
<dbReference type="HAMAP" id="MF_01328_B">
    <property type="entry name" value="Ribosomal_uL4_B"/>
    <property type="match status" value="1"/>
</dbReference>
<dbReference type="InterPro" id="IPR002136">
    <property type="entry name" value="Ribosomal_uL4"/>
</dbReference>
<dbReference type="InterPro" id="IPR013005">
    <property type="entry name" value="Ribosomal_uL4-like"/>
</dbReference>
<dbReference type="InterPro" id="IPR023574">
    <property type="entry name" value="Ribosomal_uL4_dom_sf"/>
</dbReference>
<dbReference type="NCBIfam" id="TIGR03953">
    <property type="entry name" value="rplD_bact"/>
    <property type="match status" value="1"/>
</dbReference>
<dbReference type="PANTHER" id="PTHR10746">
    <property type="entry name" value="50S RIBOSOMAL PROTEIN L4"/>
    <property type="match status" value="1"/>
</dbReference>
<dbReference type="PANTHER" id="PTHR10746:SF17">
    <property type="entry name" value="LARGE RIBOSOMAL SUBUNIT PROTEIN UL4C"/>
    <property type="match status" value="1"/>
</dbReference>
<dbReference type="Pfam" id="PF00573">
    <property type="entry name" value="Ribosomal_L4"/>
    <property type="match status" value="1"/>
</dbReference>
<dbReference type="SUPFAM" id="SSF52166">
    <property type="entry name" value="Ribosomal protein L4"/>
    <property type="match status" value="1"/>
</dbReference>
<evidence type="ECO:0000255" key="1">
    <source>
        <dbReference type="HAMAP-Rule" id="MF_01328"/>
    </source>
</evidence>
<evidence type="ECO:0000256" key="2">
    <source>
        <dbReference type="SAM" id="MobiDB-lite"/>
    </source>
</evidence>
<evidence type="ECO:0000305" key="3"/>
<keyword id="KW-1185">Reference proteome</keyword>
<keyword id="KW-0687">Ribonucleoprotein</keyword>
<keyword id="KW-0689">Ribosomal protein</keyword>
<keyword id="KW-0694">RNA-binding</keyword>
<keyword id="KW-0699">rRNA-binding</keyword>
<name>RL4_PROMT</name>
<accession>Q46IR0</accession>
<sequence>MTNCTVLDWQGKEAGESSIDLKTAKESSAADLLHRAVLRQQAHSRQGTASTLTRSEVRGGGRKPYKQKGTGRARQGSIRTPLRPGGGIIFGPKPRKYNLEMNRKERRLALRTALMSRIPDAKIIKDFGSKLEVPKTSEIVALLKRVGIDSDVKILIILNKPSEIIKRSIKNLEKVKLISADQLNVFDLLNANSLVIGEDALSTIKEVYGND</sequence>
<proteinExistence type="inferred from homology"/>
<reference key="1">
    <citation type="journal article" date="2007" name="PLoS Genet.">
        <title>Patterns and implications of gene gain and loss in the evolution of Prochlorococcus.</title>
        <authorList>
            <person name="Kettler G.C."/>
            <person name="Martiny A.C."/>
            <person name="Huang K."/>
            <person name="Zucker J."/>
            <person name="Coleman M.L."/>
            <person name="Rodrigue S."/>
            <person name="Chen F."/>
            <person name="Lapidus A."/>
            <person name="Ferriera S."/>
            <person name="Johnson J."/>
            <person name="Steglich C."/>
            <person name="Church G.M."/>
            <person name="Richardson P."/>
            <person name="Chisholm S.W."/>
        </authorList>
    </citation>
    <scope>NUCLEOTIDE SEQUENCE [LARGE SCALE GENOMIC DNA]</scope>
    <source>
        <strain>NATL2A</strain>
    </source>
</reference>
<gene>
    <name evidence="1" type="primary">rplD</name>
    <name evidence="1" type="synonym">rpl4</name>
    <name type="ordered locus">PMN2A_1128</name>
</gene>
<feature type="chain" id="PRO_0000242413" description="Large ribosomal subunit protein uL4">
    <location>
        <begin position="1"/>
        <end position="211"/>
    </location>
</feature>
<feature type="region of interest" description="Disordered" evidence="2">
    <location>
        <begin position="40"/>
        <end position="85"/>
    </location>
</feature>
<feature type="compositionally biased region" description="Polar residues" evidence="2">
    <location>
        <begin position="41"/>
        <end position="54"/>
    </location>
</feature>
<feature type="compositionally biased region" description="Basic residues" evidence="2">
    <location>
        <begin position="60"/>
        <end position="71"/>
    </location>
</feature>
<organism>
    <name type="scientific">Prochlorococcus marinus (strain NATL2A)</name>
    <dbReference type="NCBI Taxonomy" id="59920"/>
    <lineage>
        <taxon>Bacteria</taxon>
        <taxon>Bacillati</taxon>
        <taxon>Cyanobacteriota</taxon>
        <taxon>Cyanophyceae</taxon>
        <taxon>Synechococcales</taxon>
        <taxon>Prochlorococcaceae</taxon>
        <taxon>Prochlorococcus</taxon>
    </lineage>
</organism>
<comment type="function">
    <text evidence="1">One of the primary rRNA binding proteins, this protein initially binds near the 5'-end of the 23S rRNA. It is important during the early stages of 50S assembly. It makes multiple contacts with different domains of the 23S rRNA in the assembled 50S subunit and ribosome.</text>
</comment>
<comment type="function">
    <text evidence="1">Forms part of the polypeptide exit tunnel.</text>
</comment>
<comment type="subunit">
    <text evidence="1">Part of the 50S ribosomal subunit.</text>
</comment>
<comment type="similarity">
    <text evidence="1">Belongs to the universal ribosomal protein uL4 family.</text>
</comment>
<protein>
    <recommendedName>
        <fullName evidence="1">Large ribosomal subunit protein uL4</fullName>
    </recommendedName>
    <alternativeName>
        <fullName evidence="3">50S ribosomal protein L4</fullName>
    </alternativeName>
</protein>